<proteinExistence type="evidence at transcript level"/>
<protein>
    <recommendedName>
        <fullName>Trypsin, alkaline C</fullName>
        <ecNumber>3.4.21.4</ecNumber>
    </recommendedName>
</protein>
<name>TRYC_MANSE</name>
<organism>
    <name type="scientific">Manduca sexta</name>
    <name type="common">Tobacco hawkmoth</name>
    <name type="synonym">Tobacco hornworm</name>
    <dbReference type="NCBI Taxonomy" id="7130"/>
    <lineage>
        <taxon>Eukaryota</taxon>
        <taxon>Metazoa</taxon>
        <taxon>Ecdysozoa</taxon>
        <taxon>Arthropoda</taxon>
        <taxon>Hexapoda</taxon>
        <taxon>Insecta</taxon>
        <taxon>Pterygota</taxon>
        <taxon>Neoptera</taxon>
        <taxon>Endopterygota</taxon>
        <taxon>Lepidoptera</taxon>
        <taxon>Glossata</taxon>
        <taxon>Ditrysia</taxon>
        <taxon>Bombycoidea</taxon>
        <taxon>Sphingidae</taxon>
        <taxon>Sphinginae</taxon>
        <taxon>Sphingini</taxon>
        <taxon>Manduca</taxon>
    </lineage>
</organism>
<keyword id="KW-1015">Disulfide bond</keyword>
<keyword id="KW-0378">Hydrolase</keyword>
<keyword id="KW-0645">Protease</keyword>
<keyword id="KW-0964">Secreted</keyword>
<keyword id="KW-0720">Serine protease</keyword>
<keyword id="KW-0732">Signal</keyword>
<keyword id="KW-0865">Zymogen</keyword>
<comment type="catalytic activity">
    <reaction>
        <text>Preferential cleavage: Arg-|-Xaa, Lys-|-Xaa.</text>
        <dbReference type="EC" id="3.4.21.4"/>
    </reaction>
</comment>
<comment type="subcellular location">
    <subcellularLocation>
        <location>Secreted</location>
        <location>Extracellular space</location>
    </subcellularLocation>
</comment>
<comment type="tissue specificity">
    <text>Midgut.</text>
</comment>
<comment type="similarity">
    <text evidence="3">Belongs to the peptidase S1 family.</text>
</comment>
<comment type="sequence caution" evidence="4">
    <conflict type="erroneous initiation">
        <sequence resource="EMBL-CDS" id="AAA29341"/>
    </conflict>
</comment>
<feature type="signal peptide" evidence="2">
    <location>
        <begin position="1"/>
        <end position="17"/>
    </location>
</feature>
<feature type="propeptide" id="PRO_0000028295" description="Activation peptide">
    <location>
        <begin position="18"/>
        <end position="24"/>
    </location>
</feature>
<feature type="chain" id="PRO_0000028296" description="Trypsin, alkaline C">
    <location>
        <begin position="25"/>
        <end position="256"/>
    </location>
</feature>
<feature type="domain" description="Peptidase S1" evidence="3">
    <location>
        <begin position="25"/>
        <end position="256"/>
    </location>
</feature>
<feature type="active site" description="Charge relay system" evidence="1">
    <location>
        <position position="70"/>
    </location>
</feature>
<feature type="active site" description="Charge relay system" evidence="1">
    <location>
        <position position="115"/>
    </location>
</feature>
<feature type="active site" description="Charge relay system" evidence="1">
    <location>
        <position position="213"/>
    </location>
</feature>
<feature type="site" description="Required for specificity" evidence="1">
    <location>
        <position position="207"/>
    </location>
</feature>
<feature type="disulfide bond" evidence="3">
    <location>
        <begin position="55"/>
        <end position="71"/>
    </location>
</feature>
<feature type="disulfide bond" evidence="3">
    <location>
        <begin position="180"/>
        <end position="197"/>
    </location>
</feature>
<feature type="disulfide bond" evidence="3">
    <location>
        <begin position="209"/>
        <end position="233"/>
    </location>
</feature>
<evidence type="ECO:0000250" key="1"/>
<evidence type="ECO:0000255" key="2"/>
<evidence type="ECO:0000255" key="3">
    <source>
        <dbReference type="PROSITE-ProRule" id="PRU00274"/>
    </source>
</evidence>
<evidence type="ECO:0000305" key="4"/>
<dbReference type="EC" id="3.4.21.4"/>
<dbReference type="EMBL" id="L16807">
    <property type="protein sequence ID" value="AAA29341.1"/>
    <property type="status" value="ALT_INIT"/>
    <property type="molecule type" value="mRNA"/>
</dbReference>
<dbReference type="SMR" id="P35047"/>
<dbReference type="MEROPS" id="S01.420"/>
<dbReference type="OrthoDB" id="9425590at2759"/>
<dbReference type="GO" id="GO:0005576">
    <property type="term" value="C:extracellular region"/>
    <property type="evidence" value="ECO:0007669"/>
    <property type="project" value="UniProtKB-SubCell"/>
</dbReference>
<dbReference type="GO" id="GO:0004252">
    <property type="term" value="F:serine-type endopeptidase activity"/>
    <property type="evidence" value="ECO:0007669"/>
    <property type="project" value="UniProtKB-EC"/>
</dbReference>
<dbReference type="GO" id="GO:0006508">
    <property type="term" value="P:proteolysis"/>
    <property type="evidence" value="ECO:0007669"/>
    <property type="project" value="UniProtKB-KW"/>
</dbReference>
<dbReference type="CDD" id="cd00190">
    <property type="entry name" value="Tryp_SPc"/>
    <property type="match status" value="1"/>
</dbReference>
<dbReference type="FunFam" id="2.40.10.10:FF:000047">
    <property type="entry name" value="Trypsin eta"/>
    <property type="match status" value="1"/>
</dbReference>
<dbReference type="Gene3D" id="2.40.10.10">
    <property type="entry name" value="Trypsin-like serine proteases"/>
    <property type="match status" value="1"/>
</dbReference>
<dbReference type="InterPro" id="IPR050430">
    <property type="entry name" value="Peptidase_S1"/>
</dbReference>
<dbReference type="InterPro" id="IPR009003">
    <property type="entry name" value="Peptidase_S1_PA"/>
</dbReference>
<dbReference type="InterPro" id="IPR043504">
    <property type="entry name" value="Peptidase_S1_PA_chymotrypsin"/>
</dbReference>
<dbReference type="InterPro" id="IPR001314">
    <property type="entry name" value="Peptidase_S1A"/>
</dbReference>
<dbReference type="InterPro" id="IPR001254">
    <property type="entry name" value="Trypsin_dom"/>
</dbReference>
<dbReference type="InterPro" id="IPR018114">
    <property type="entry name" value="TRYPSIN_HIS"/>
</dbReference>
<dbReference type="InterPro" id="IPR033116">
    <property type="entry name" value="TRYPSIN_SER"/>
</dbReference>
<dbReference type="PANTHER" id="PTHR24276:SF91">
    <property type="entry name" value="AT26814P-RELATED"/>
    <property type="match status" value="1"/>
</dbReference>
<dbReference type="PANTHER" id="PTHR24276">
    <property type="entry name" value="POLYSERASE-RELATED"/>
    <property type="match status" value="1"/>
</dbReference>
<dbReference type="Pfam" id="PF00089">
    <property type="entry name" value="Trypsin"/>
    <property type="match status" value="1"/>
</dbReference>
<dbReference type="PRINTS" id="PR00722">
    <property type="entry name" value="CHYMOTRYPSIN"/>
</dbReference>
<dbReference type="SMART" id="SM00020">
    <property type="entry name" value="Tryp_SPc"/>
    <property type="match status" value="1"/>
</dbReference>
<dbReference type="SUPFAM" id="SSF50494">
    <property type="entry name" value="Trypsin-like serine proteases"/>
    <property type="match status" value="1"/>
</dbReference>
<dbReference type="PROSITE" id="PS50240">
    <property type="entry name" value="TRYPSIN_DOM"/>
    <property type="match status" value="1"/>
</dbReference>
<dbReference type="PROSITE" id="PS00134">
    <property type="entry name" value="TRYPSIN_HIS"/>
    <property type="match status" value="1"/>
</dbReference>
<dbReference type="PROSITE" id="PS00135">
    <property type="entry name" value="TRYPSIN_SER"/>
    <property type="match status" value="1"/>
</dbReference>
<accession>P35047</accession>
<reference key="1">
    <citation type="journal article" date="1994" name="Insect Biochem. Mol. Biol.">
        <title>Sequence of three cDNAs encoding an alkaline midgut trypsin from Manduca sexta.</title>
        <authorList>
            <person name="Peterson A.M."/>
            <person name="Barillas-Mury C.V."/>
            <person name="Wells M.A."/>
        </authorList>
    </citation>
    <scope>NUCLEOTIDE SEQUENCE [MRNA]</scope>
    <source>
        <tissue>Midgut</tissue>
    </source>
</reference>
<sequence>MRLFLALLALGFAAVAAVPANPQRIVGGSTTTIQQYPTIVALLFSRNGNTFFQACGGTILNNRNVLTAAHCPHGDAVNRWRVRSGSTFANSGGAVHNLNSVRIHPNYNRRNLDNDIAIMRTASNIAFNNAAQPARIAGANYNLGDNQVVWAAGWGAIRSGGPSSEQLRHVQVWTVNQATCRSRYASIGRTVTDNMLCSGWLDVGGRDQCQGDSGGPLYHNGVVVGVCSWGEECALARFPGVNARVTRYTSWISNNS</sequence>